<evidence type="ECO:0000250" key="1"/>
<evidence type="ECO:0000255" key="2"/>
<evidence type="ECO:0000305" key="3"/>
<accession>P60154</accession>
<protein>
    <recommendedName>
        <fullName>Inactive ribonuclease-like protein 9</fullName>
    </recommendedName>
</protein>
<sequence length="184" mass="21378">MKPLVIKFAWPLPLLLLLLLPPKLQGNYWDFGEYELNPEVRDFIREYESTGPTKPPTVKRIIEMITIGDQPFNDYDYCNTELRTKQIHYKGRCYPEHYIAGVPYGELVKACDGEEVQCKNGVKSCRRSMNLIEGVRCVLETGQQMTNCTYKTILMIGYPVVSCQWDEETKIFIPDHIYNMSLPK</sequence>
<reference key="1">
    <citation type="journal article" date="2003" name="Mol. Endocrinol.">
        <title>Discovery in silico and characterization in vitro of novel genes exclusively expressed in the mouse epididymis.</title>
        <authorList>
            <person name="Penttinen J."/>
            <person name="Pujianto D.A."/>
            <person name="Sipilae P."/>
            <person name="Huhtaniemi I."/>
            <person name="Poutanen M."/>
        </authorList>
    </citation>
    <scope>NUCLEOTIDE SEQUENCE [MRNA]</scope>
    <source>
        <strain>FVB/N</strain>
        <tissue>Epididymis</tissue>
    </source>
</reference>
<keyword id="KW-1015">Disulfide bond</keyword>
<keyword id="KW-0325">Glycoprotein</keyword>
<keyword id="KW-1185">Reference proteome</keyword>
<keyword id="KW-0964">Secreted</keyword>
<keyword id="KW-0732">Signal</keyword>
<gene>
    <name type="primary">Rnase9</name>
</gene>
<dbReference type="EMBL" id="AY226989">
    <property type="protein sequence ID" value="AAP43946.1"/>
    <property type="molecule type" value="mRNA"/>
</dbReference>
<dbReference type="CCDS" id="CCDS36909.1"/>
<dbReference type="RefSeq" id="NP_898853.2">
    <property type="nucleotide sequence ID" value="NM_183032.2"/>
</dbReference>
<dbReference type="RefSeq" id="XP_006519205.1">
    <property type="nucleotide sequence ID" value="XM_006519142.4"/>
</dbReference>
<dbReference type="SMR" id="P60154"/>
<dbReference type="STRING" id="10090.ENSMUSP00000066637"/>
<dbReference type="GlyCosmos" id="P60154">
    <property type="glycosylation" value="2 sites, No reported glycans"/>
</dbReference>
<dbReference type="GlyGen" id="P60154">
    <property type="glycosylation" value="3 sites"/>
</dbReference>
<dbReference type="iPTMnet" id="P60154"/>
<dbReference type="PhosphoSitePlus" id="P60154"/>
<dbReference type="PaxDb" id="10090-ENSMUSP00000066637"/>
<dbReference type="ProteomicsDB" id="299924"/>
<dbReference type="Antibodypedia" id="175">
    <property type="antibodies" value="117 antibodies from 17 providers"/>
</dbReference>
<dbReference type="Ensembl" id="ENSMUST00000064214.4">
    <property type="protein sequence ID" value="ENSMUSP00000066637.4"/>
    <property type="gene ID" value="ENSMUSG00000052382.6"/>
</dbReference>
<dbReference type="GeneID" id="328401"/>
<dbReference type="KEGG" id="mmu:328401"/>
<dbReference type="UCSC" id="uc007tmh.1">
    <property type="organism name" value="mouse"/>
</dbReference>
<dbReference type="AGR" id="MGI:3057273"/>
<dbReference type="CTD" id="390443"/>
<dbReference type="MGI" id="MGI:3057273">
    <property type="gene designation" value="Rnase9"/>
</dbReference>
<dbReference type="VEuPathDB" id="HostDB:ENSMUSG00000052382"/>
<dbReference type="eggNOG" id="ENOG502TDU6">
    <property type="taxonomic scope" value="Eukaryota"/>
</dbReference>
<dbReference type="GeneTree" id="ENSGT00390000013952"/>
<dbReference type="HOGENOM" id="CLU_1464451_0_0_1"/>
<dbReference type="InParanoid" id="P60154"/>
<dbReference type="OMA" id="PCKNGVK"/>
<dbReference type="OrthoDB" id="9835306at2759"/>
<dbReference type="PhylomeDB" id="P60154"/>
<dbReference type="TreeFam" id="TF338401"/>
<dbReference type="BioGRID-ORCS" id="328401">
    <property type="hits" value="2 hits in 75 CRISPR screens"/>
</dbReference>
<dbReference type="PRO" id="PR:P60154"/>
<dbReference type="Proteomes" id="UP000000589">
    <property type="component" value="Chromosome 14"/>
</dbReference>
<dbReference type="RNAct" id="P60154">
    <property type="molecule type" value="protein"/>
</dbReference>
<dbReference type="Bgee" id="ENSMUSG00000052382">
    <property type="expression patterns" value="Expressed in mesodermal cell in embryo and 1 other cell type or tissue"/>
</dbReference>
<dbReference type="ExpressionAtlas" id="P60154">
    <property type="expression patterns" value="baseline and differential"/>
</dbReference>
<dbReference type="GO" id="GO:0005576">
    <property type="term" value="C:extracellular region"/>
    <property type="evidence" value="ECO:0007669"/>
    <property type="project" value="UniProtKB-SubCell"/>
</dbReference>
<dbReference type="GO" id="GO:0003676">
    <property type="term" value="F:nucleic acid binding"/>
    <property type="evidence" value="ECO:0007669"/>
    <property type="project" value="InterPro"/>
</dbReference>
<dbReference type="GO" id="GO:0060474">
    <property type="term" value="P:positive regulation of flagellated sperm motility involved in capacitation"/>
    <property type="evidence" value="ECO:0000315"/>
    <property type="project" value="MGI"/>
</dbReference>
<dbReference type="CDD" id="cd00163">
    <property type="entry name" value="RNase_A"/>
    <property type="match status" value="1"/>
</dbReference>
<dbReference type="FunFam" id="3.10.130.10:FF:000007">
    <property type="entry name" value="Inactive ribonuclease-like protein 9"/>
    <property type="match status" value="1"/>
</dbReference>
<dbReference type="Gene3D" id="3.10.130.10">
    <property type="entry name" value="Ribonuclease A-like domain"/>
    <property type="match status" value="1"/>
</dbReference>
<dbReference type="InterPro" id="IPR001427">
    <property type="entry name" value="RNaseA"/>
</dbReference>
<dbReference type="InterPro" id="IPR036816">
    <property type="entry name" value="RNaseA-like_dom_sf"/>
</dbReference>
<dbReference type="InterPro" id="IPR023412">
    <property type="entry name" value="RNaseA_domain"/>
</dbReference>
<dbReference type="PANTHER" id="PTHR11437:SF14">
    <property type="entry name" value="INACTIVE RIBONUCLEASE-LIKE PROTEIN 9"/>
    <property type="match status" value="1"/>
</dbReference>
<dbReference type="PANTHER" id="PTHR11437">
    <property type="entry name" value="RIBONUCLEASE"/>
    <property type="match status" value="1"/>
</dbReference>
<dbReference type="Pfam" id="PF00074">
    <property type="entry name" value="RnaseA"/>
    <property type="match status" value="1"/>
</dbReference>
<dbReference type="SUPFAM" id="SSF54076">
    <property type="entry name" value="RNase A-like"/>
    <property type="match status" value="1"/>
</dbReference>
<comment type="function">
    <text evidence="1">Does not exhibit any ribonuclease activity.</text>
</comment>
<comment type="subcellular location">
    <subcellularLocation>
        <location evidence="3">Secreted</location>
    </subcellularLocation>
</comment>
<comment type="similarity">
    <text evidence="3">Belongs to the pancreatic ribonuclease family.</text>
</comment>
<name>RNAS9_MOUSE</name>
<proteinExistence type="evidence at transcript level"/>
<feature type="signal peptide" evidence="2">
    <location>
        <begin position="1"/>
        <end position="25"/>
    </location>
</feature>
<feature type="chain" id="PRO_0000030956" description="Inactive ribonuclease-like protein 9">
    <location>
        <begin position="26"/>
        <end position="184"/>
    </location>
</feature>
<feature type="glycosylation site" description="N-linked (GlcNAc...) asparagine" evidence="2">
    <location>
        <position position="147"/>
    </location>
</feature>
<feature type="glycosylation site" description="N-linked (GlcNAc...) asparagine" evidence="2">
    <location>
        <position position="179"/>
    </location>
</feature>
<feature type="disulfide bond" evidence="1">
    <location>
        <begin position="93"/>
        <end position="148"/>
    </location>
</feature>
<feature type="disulfide bond" evidence="1">
    <location>
        <begin position="111"/>
        <end position="163"/>
    </location>
</feature>
<feature type="disulfide bond" evidence="1">
    <location>
        <begin position="118"/>
        <end position="125"/>
    </location>
</feature>
<organism>
    <name type="scientific">Mus musculus</name>
    <name type="common">Mouse</name>
    <dbReference type="NCBI Taxonomy" id="10090"/>
    <lineage>
        <taxon>Eukaryota</taxon>
        <taxon>Metazoa</taxon>
        <taxon>Chordata</taxon>
        <taxon>Craniata</taxon>
        <taxon>Vertebrata</taxon>
        <taxon>Euteleostomi</taxon>
        <taxon>Mammalia</taxon>
        <taxon>Eutheria</taxon>
        <taxon>Euarchontoglires</taxon>
        <taxon>Glires</taxon>
        <taxon>Rodentia</taxon>
        <taxon>Myomorpha</taxon>
        <taxon>Muroidea</taxon>
        <taxon>Muridae</taxon>
        <taxon>Murinae</taxon>
        <taxon>Mus</taxon>
        <taxon>Mus</taxon>
    </lineage>
</organism>